<evidence type="ECO:0000250" key="1"/>
<evidence type="ECO:0000255" key="2"/>
<evidence type="ECO:0000305" key="3"/>
<accession>Q6FNU9</accession>
<reference key="1">
    <citation type="journal article" date="2004" name="Nature">
        <title>Genome evolution in yeasts.</title>
        <authorList>
            <person name="Dujon B."/>
            <person name="Sherman D."/>
            <person name="Fischer G."/>
            <person name="Durrens P."/>
            <person name="Casaregola S."/>
            <person name="Lafontaine I."/>
            <person name="de Montigny J."/>
            <person name="Marck C."/>
            <person name="Neuveglise C."/>
            <person name="Talla E."/>
            <person name="Goffard N."/>
            <person name="Frangeul L."/>
            <person name="Aigle M."/>
            <person name="Anthouard V."/>
            <person name="Babour A."/>
            <person name="Barbe V."/>
            <person name="Barnay S."/>
            <person name="Blanchin S."/>
            <person name="Beckerich J.-M."/>
            <person name="Beyne E."/>
            <person name="Bleykasten C."/>
            <person name="Boisrame A."/>
            <person name="Boyer J."/>
            <person name="Cattolico L."/>
            <person name="Confanioleri F."/>
            <person name="de Daruvar A."/>
            <person name="Despons L."/>
            <person name="Fabre E."/>
            <person name="Fairhead C."/>
            <person name="Ferry-Dumazet H."/>
            <person name="Groppi A."/>
            <person name="Hantraye F."/>
            <person name="Hennequin C."/>
            <person name="Jauniaux N."/>
            <person name="Joyet P."/>
            <person name="Kachouri R."/>
            <person name="Kerrest A."/>
            <person name="Koszul R."/>
            <person name="Lemaire M."/>
            <person name="Lesur I."/>
            <person name="Ma L."/>
            <person name="Muller H."/>
            <person name="Nicaud J.-M."/>
            <person name="Nikolski M."/>
            <person name="Oztas S."/>
            <person name="Ozier-Kalogeropoulos O."/>
            <person name="Pellenz S."/>
            <person name="Potier S."/>
            <person name="Richard G.-F."/>
            <person name="Straub M.-L."/>
            <person name="Suleau A."/>
            <person name="Swennen D."/>
            <person name="Tekaia F."/>
            <person name="Wesolowski-Louvel M."/>
            <person name="Westhof E."/>
            <person name="Wirth B."/>
            <person name="Zeniou-Meyer M."/>
            <person name="Zivanovic Y."/>
            <person name="Bolotin-Fukuhara M."/>
            <person name="Thierry A."/>
            <person name="Bouchier C."/>
            <person name="Caudron B."/>
            <person name="Scarpelli C."/>
            <person name="Gaillardin C."/>
            <person name="Weissenbach J."/>
            <person name="Wincker P."/>
            <person name="Souciet J.-L."/>
        </authorList>
    </citation>
    <scope>NUCLEOTIDE SEQUENCE [LARGE SCALE GENOMIC DNA]</scope>
    <source>
        <strain>ATCC 2001 / BCRC 20586 / JCM 3761 / NBRC 0622 / NRRL Y-65 / CBS 138</strain>
    </source>
</reference>
<organism>
    <name type="scientific">Candida glabrata (strain ATCC 2001 / BCRC 20586 / JCM 3761 / NBRC 0622 / NRRL Y-65 / CBS 138)</name>
    <name type="common">Yeast</name>
    <name type="synonym">Nakaseomyces glabratus</name>
    <dbReference type="NCBI Taxonomy" id="284593"/>
    <lineage>
        <taxon>Eukaryota</taxon>
        <taxon>Fungi</taxon>
        <taxon>Dikarya</taxon>
        <taxon>Ascomycota</taxon>
        <taxon>Saccharomycotina</taxon>
        <taxon>Saccharomycetes</taxon>
        <taxon>Saccharomycetales</taxon>
        <taxon>Saccharomycetaceae</taxon>
        <taxon>Nakaseomyces</taxon>
    </lineage>
</organism>
<feature type="chain" id="PRO_0000048450" description="Tubulin gamma chain">
    <location>
        <begin position="1"/>
        <end position="465"/>
    </location>
</feature>
<feature type="binding site" evidence="2">
    <location>
        <begin position="144"/>
        <end position="150"/>
    </location>
    <ligand>
        <name>GTP</name>
        <dbReference type="ChEBI" id="CHEBI:37565"/>
    </ligand>
</feature>
<proteinExistence type="inferred from homology"/>
<name>TBG_CANGA</name>
<protein>
    <recommendedName>
        <fullName>Tubulin gamma chain</fullName>
    </recommendedName>
    <alternativeName>
        <fullName>Gamma-tubulin</fullName>
    </alternativeName>
</protein>
<gene>
    <name type="primary">TUB4</name>
    <name type="ordered locus">CAGL0J08888g</name>
</gene>
<dbReference type="EMBL" id="CR380956">
    <property type="protein sequence ID" value="CAG61046.1"/>
    <property type="molecule type" value="Genomic_DNA"/>
</dbReference>
<dbReference type="RefSeq" id="XP_448095.1">
    <property type="nucleotide sequence ID" value="XM_448095.1"/>
</dbReference>
<dbReference type="SMR" id="Q6FNU9"/>
<dbReference type="FunCoup" id="Q6FNU9">
    <property type="interactions" value="746"/>
</dbReference>
<dbReference type="STRING" id="284593.Q6FNU9"/>
<dbReference type="EnsemblFungi" id="CAGL0J08888g-T">
    <property type="protein sequence ID" value="CAGL0J08888g-T-p1"/>
    <property type="gene ID" value="CAGL0J08888g"/>
</dbReference>
<dbReference type="KEGG" id="cgr:2889469"/>
<dbReference type="CGD" id="CAL0133032">
    <property type="gene designation" value="CAGL0J08888g"/>
</dbReference>
<dbReference type="VEuPathDB" id="FungiDB:B1J91_J08888g"/>
<dbReference type="VEuPathDB" id="FungiDB:CAGL0J08888g"/>
<dbReference type="eggNOG" id="KOG1374">
    <property type="taxonomic scope" value="Eukaryota"/>
</dbReference>
<dbReference type="HOGENOM" id="CLU_015718_1_0_1"/>
<dbReference type="InParanoid" id="Q6FNU9"/>
<dbReference type="OMA" id="HRYISIL"/>
<dbReference type="Proteomes" id="UP000002428">
    <property type="component" value="Chromosome J"/>
</dbReference>
<dbReference type="GO" id="GO:0005737">
    <property type="term" value="C:cytoplasm"/>
    <property type="evidence" value="ECO:0007669"/>
    <property type="project" value="UniProtKB-KW"/>
</dbReference>
<dbReference type="GO" id="GO:0008275">
    <property type="term" value="C:gamma-tubulin small complex"/>
    <property type="evidence" value="ECO:0007669"/>
    <property type="project" value="EnsemblFungi"/>
</dbReference>
<dbReference type="GO" id="GO:0005822">
    <property type="term" value="C:inner plaque of spindle pole body"/>
    <property type="evidence" value="ECO:0007669"/>
    <property type="project" value="EnsemblFungi"/>
</dbReference>
<dbReference type="GO" id="GO:0005874">
    <property type="term" value="C:microtubule"/>
    <property type="evidence" value="ECO:0007669"/>
    <property type="project" value="UniProtKB-KW"/>
</dbReference>
<dbReference type="GO" id="GO:0005824">
    <property type="term" value="C:outer plaque of spindle pole body"/>
    <property type="evidence" value="ECO:0007669"/>
    <property type="project" value="EnsemblFungi"/>
</dbReference>
<dbReference type="GO" id="GO:0005525">
    <property type="term" value="F:GTP binding"/>
    <property type="evidence" value="ECO:0007669"/>
    <property type="project" value="UniProtKB-KW"/>
</dbReference>
<dbReference type="GO" id="GO:0005200">
    <property type="term" value="F:structural constituent of cytoskeleton"/>
    <property type="evidence" value="ECO:0007669"/>
    <property type="project" value="EnsemblFungi"/>
</dbReference>
<dbReference type="GO" id="GO:0031122">
    <property type="term" value="P:cytoplasmic microtubule organization"/>
    <property type="evidence" value="ECO:0007669"/>
    <property type="project" value="InterPro"/>
</dbReference>
<dbReference type="GO" id="GO:0051417">
    <property type="term" value="P:microtubule nucleation by spindle pole body"/>
    <property type="evidence" value="ECO:0007669"/>
    <property type="project" value="EnsemblFungi"/>
</dbReference>
<dbReference type="GO" id="GO:0007052">
    <property type="term" value="P:mitotic spindle organization"/>
    <property type="evidence" value="ECO:0007669"/>
    <property type="project" value="EnsemblFungi"/>
</dbReference>
<dbReference type="GO" id="GO:2000767">
    <property type="term" value="P:positive regulation of cytoplasmic translation"/>
    <property type="evidence" value="ECO:0007669"/>
    <property type="project" value="EnsemblFungi"/>
</dbReference>
<dbReference type="CDD" id="cd02188">
    <property type="entry name" value="gamma_tubulin"/>
    <property type="match status" value="1"/>
</dbReference>
<dbReference type="Gene3D" id="1.10.287.600">
    <property type="entry name" value="Helix hairpin bin"/>
    <property type="match status" value="1"/>
</dbReference>
<dbReference type="Gene3D" id="3.30.1330.20">
    <property type="entry name" value="Tubulin/FtsZ, C-terminal domain"/>
    <property type="match status" value="1"/>
</dbReference>
<dbReference type="Gene3D" id="3.40.50.1440">
    <property type="entry name" value="Tubulin/FtsZ, GTPase domain"/>
    <property type="match status" value="1"/>
</dbReference>
<dbReference type="InterPro" id="IPR002454">
    <property type="entry name" value="Gamma_tubulin"/>
</dbReference>
<dbReference type="InterPro" id="IPR008280">
    <property type="entry name" value="Tub_FtsZ_C"/>
</dbReference>
<dbReference type="InterPro" id="IPR000217">
    <property type="entry name" value="Tubulin"/>
</dbReference>
<dbReference type="InterPro" id="IPR037103">
    <property type="entry name" value="Tubulin/FtsZ-like_C"/>
</dbReference>
<dbReference type="InterPro" id="IPR018316">
    <property type="entry name" value="Tubulin/FtsZ_2-layer-sand-dom"/>
</dbReference>
<dbReference type="InterPro" id="IPR036525">
    <property type="entry name" value="Tubulin/FtsZ_GTPase_sf"/>
</dbReference>
<dbReference type="InterPro" id="IPR023123">
    <property type="entry name" value="Tubulin_C"/>
</dbReference>
<dbReference type="InterPro" id="IPR017975">
    <property type="entry name" value="Tubulin_CS"/>
</dbReference>
<dbReference type="InterPro" id="IPR003008">
    <property type="entry name" value="Tubulin_FtsZ_GTPase"/>
</dbReference>
<dbReference type="PANTHER" id="PTHR11588">
    <property type="entry name" value="TUBULIN"/>
    <property type="match status" value="1"/>
</dbReference>
<dbReference type="Pfam" id="PF00091">
    <property type="entry name" value="Tubulin"/>
    <property type="match status" value="1"/>
</dbReference>
<dbReference type="Pfam" id="PF03953">
    <property type="entry name" value="Tubulin_C"/>
    <property type="match status" value="1"/>
</dbReference>
<dbReference type="PRINTS" id="PR01164">
    <property type="entry name" value="GAMMATUBULIN"/>
</dbReference>
<dbReference type="PRINTS" id="PR01161">
    <property type="entry name" value="TUBULIN"/>
</dbReference>
<dbReference type="SMART" id="SM00864">
    <property type="entry name" value="Tubulin"/>
    <property type="match status" value="1"/>
</dbReference>
<dbReference type="SMART" id="SM00865">
    <property type="entry name" value="Tubulin_C"/>
    <property type="match status" value="1"/>
</dbReference>
<dbReference type="SUPFAM" id="SSF55307">
    <property type="entry name" value="Tubulin C-terminal domain-like"/>
    <property type="match status" value="1"/>
</dbReference>
<dbReference type="SUPFAM" id="SSF52490">
    <property type="entry name" value="Tubulin nucleotide-binding domain-like"/>
    <property type="match status" value="1"/>
</dbReference>
<dbReference type="PROSITE" id="PS00227">
    <property type="entry name" value="TUBULIN"/>
    <property type="match status" value="1"/>
</dbReference>
<sequence length="465" mass="52344">MTGEIITIQVGQCGNHVGKYFWNQLLKEHGIDKDGYSKYNDDLTHIREDDTNPFFKQITNNRYVPRAIMIDLEPAAVTDVQSSFNDLFNPRNTWVSSEGLGAGNSWSTGYDRGVQNQDRIMDIIDRELDSTDNFEGFQLLHSVAGGTGSGLGSSLLEALTDRYSKSFITTYSVFPSKQSEVVVGPYNTVLTLRRLCEDADASIIFDNNALLNLTARTFRDPNTSYEHTNQLISSALSSITNSLRFPSYMYNSMASIFSTLIPTPELHFLTPNFTPFTPDYIIGGQRYKKNTAYDVLLDLLDPFNSLVTQRSDMVTHFNVFSTVIGEVDQNHILRALPKMQQRLNMPSWSTSALNVNIGRRSPYLPPLESRENSVSGLMLSNTSAITSVFERSASAFDKLFYKGAFLNQFESGQLFQNGLDEFVESREVITRMMEEYSNAEQDTYLDDILNEDDIMIGGFDNEGDS</sequence>
<comment type="function">
    <text evidence="1">Tubulin is the major constituent of microtubules. The gamma chain is found at microtubule organizing centers (MTOC) such as the spindle poles or the centrosome, suggesting that it is involved in the minus-end nucleation of microtubule assembly (By similarity).</text>
</comment>
<comment type="subcellular location">
    <subcellularLocation>
        <location evidence="3">Cytoplasm</location>
        <location evidence="3">Cytoskeleton</location>
        <location evidence="3">Microtubule organizing center</location>
        <location evidence="3">Spindle pole body</location>
    </subcellularLocation>
</comment>
<comment type="similarity">
    <text evidence="3">Belongs to the tubulin family.</text>
</comment>
<keyword id="KW-0963">Cytoplasm</keyword>
<keyword id="KW-0206">Cytoskeleton</keyword>
<keyword id="KW-0342">GTP-binding</keyword>
<keyword id="KW-0493">Microtubule</keyword>
<keyword id="KW-0547">Nucleotide-binding</keyword>
<keyword id="KW-1185">Reference proteome</keyword>